<gene>
    <name evidence="1" type="primary">cobT</name>
    <name type="ordered locus">NGR_c17340</name>
</gene>
<keyword id="KW-0169">Cobalamin biosynthesis</keyword>
<keyword id="KW-0328">Glycosyltransferase</keyword>
<keyword id="KW-1185">Reference proteome</keyword>
<keyword id="KW-0808">Transferase</keyword>
<protein>
    <recommendedName>
        <fullName evidence="1">Nicotinate-nucleotide--dimethylbenzimidazole phosphoribosyltransferase</fullName>
        <shortName evidence="1">NN:DBI PRT</shortName>
        <ecNumber evidence="1">2.4.2.21</ecNumber>
    </recommendedName>
    <alternativeName>
        <fullName evidence="1">N(1)-alpha-phosphoribosyltransferase</fullName>
    </alternativeName>
</protein>
<evidence type="ECO:0000255" key="1">
    <source>
        <dbReference type="HAMAP-Rule" id="MF_00230"/>
    </source>
</evidence>
<organism>
    <name type="scientific">Sinorhizobium fredii (strain NBRC 101917 / NGR234)</name>
    <dbReference type="NCBI Taxonomy" id="394"/>
    <lineage>
        <taxon>Bacteria</taxon>
        <taxon>Pseudomonadati</taxon>
        <taxon>Pseudomonadota</taxon>
        <taxon>Alphaproteobacteria</taxon>
        <taxon>Hyphomicrobiales</taxon>
        <taxon>Rhizobiaceae</taxon>
        <taxon>Sinorhizobium/Ensifer group</taxon>
        <taxon>Sinorhizobium</taxon>
    </lineage>
</organism>
<accession>C3MDH9</accession>
<comment type="function">
    <text evidence="1">Catalyzes the synthesis of alpha-ribazole-5'-phosphate from nicotinate mononucleotide (NAMN) and 5,6-dimethylbenzimidazole (DMB).</text>
</comment>
<comment type="catalytic activity">
    <reaction evidence="1">
        <text>5,6-dimethylbenzimidazole + nicotinate beta-D-ribonucleotide = alpha-ribazole 5'-phosphate + nicotinate + H(+)</text>
        <dbReference type="Rhea" id="RHEA:11196"/>
        <dbReference type="ChEBI" id="CHEBI:15378"/>
        <dbReference type="ChEBI" id="CHEBI:15890"/>
        <dbReference type="ChEBI" id="CHEBI:32544"/>
        <dbReference type="ChEBI" id="CHEBI:57502"/>
        <dbReference type="ChEBI" id="CHEBI:57918"/>
        <dbReference type="EC" id="2.4.2.21"/>
    </reaction>
</comment>
<comment type="pathway">
    <text evidence="1">Nucleoside biosynthesis; alpha-ribazole biosynthesis; alpha-ribazole from 5,6-dimethylbenzimidazole: step 1/2.</text>
</comment>
<comment type="similarity">
    <text evidence="1">Belongs to the CobT family.</text>
</comment>
<proteinExistence type="inferred from homology"/>
<dbReference type="EC" id="2.4.2.21" evidence="1"/>
<dbReference type="EMBL" id="CP001389">
    <property type="protein sequence ID" value="ACP25498.1"/>
    <property type="molecule type" value="Genomic_DNA"/>
</dbReference>
<dbReference type="RefSeq" id="WP_012708267.1">
    <property type="nucleotide sequence ID" value="NC_012587.1"/>
</dbReference>
<dbReference type="RefSeq" id="YP_002826251.1">
    <property type="nucleotide sequence ID" value="NC_012587.1"/>
</dbReference>
<dbReference type="SMR" id="C3MDH9"/>
<dbReference type="STRING" id="394.NGR_c17340"/>
<dbReference type="KEGG" id="rhi:NGR_c17340"/>
<dbReference type="PATRIC" id="fig|394.7.peg.4554"/>
<dbReference type="eggNOG" id="COG2038">
    <property type="taxonomic scope" value="Bacteria"/>
</dbReference>
<dbReference type="HOGENOM" id="CLU_002982_0_1_5"/>
<dbReference type="OrthoDB" id="9781491at2"/>
<dbReference type="UniPathway" id="UPA00061">
    <property type="reaction ID" value="UER00516"/>
</dbReference>
<dbReference type="Proteomes" id="UP000001054">
    <property type="component" value="Chromosome"/>
</dbReference>
<dbReference type="GO" id="GO:0008939">
    <property type="term" value="F:nicotinate-nucleotide-dimethylbenzimidazole phosphoribosyltransferase activity"/>
    <property type="evidence" value="ECO:0007669"/>
    <property type="project" value="UniProtKB-UniRule"/>
</dbReference>
<dbReference type="GO" id="GO:0009236">
    <property type="term" value="P:cobalamin biosynthetic process"/>
    <property type="evidence" value="ECO:0007669"/>
    <property type="project" value="UniProtKB-KW"/>
</dbReference>
<dbReference type="CDD" id="cd02439">
    <property type="entry name" value="DMB-PRT_CobT"/>
    <property type="match status" value="1"/>
</dbReference>
<dbReference type="Gene3D" id="1.10.1610.10">
    <property type="match status" value="1"/>
</dbReference>
<dbReference type="Gene3D" id="3.40.50.10210">
    <property type="match status" value="1"/>
</dbReference>
<dbReference type="HAMAP" id="MF_00230">
    <property type="entry name" value="CobT"/>
    <property type="match status" value="1"/>
</dbReference>
<dbReference type="InterPro" id="IPR003200">
    <property type="entry name" value="Nict_dMeBzImd_PRibTrfase"/>
</dbReference>
<dbReference type="InterPro" id="IPR017846">
    <property type="entry name" value="Nict_dMeBzImd_PRibTrfase_bact"/>
</dbReference>
<dbReference type="InterPro" id="IPR023195">
    <property type="entry name" value="Nict_dMeBzImd_PRibTrfase_N"/>
</dbReference>
<dbReference type="InterPro" id="IPR036087">
    <property type="entry name" value="Nict_dMeBzImd_PRibTrfase_sf"/>
</dbReference>
<dbReference type="NCBIfam" id="TIGR03160">
    <property type="entry name" value="cobT_DBIPRT"/>
    <property type="match status" value="1"/>
</dbReference>
<dbReference type="NCBIfam" id="NF000996">
    <property type="entry name" value="PRK00105.1"/>
    <property type="match status" value="1"/>
</dbReference>
<dbReference type="PANTHER" id="PTHR43463">
    <property type="entry name" value="NICOTINATE-NUCLEOTIDE--DIMETHYLBENZIMIDAZOLE PHOSPHORIBOSYLTRANSFERASE"/>
    <property type="match status" value="1"/>
</dbReference>
<dbReference type="PANTHER" id="PTHR43463:SF1">
    <property type="entry name" value="NICOTINATE-NUCLEOTIDE--DIMETHYLBENZIMIDAZOLE PHOSPHORIBOSYLTRANSFERASE"/>
    <property type="match status" value="1"/>
</dbReference>
<dbReference type="Pfam" id="PF02277">
    <property type="entry name" value="DBI_PRT"/>
    <property type="match status" value="1"/>
</dbReference>
<dbReference type="SUPFAM" id="SSF52733">
    <property type="entry name" value="Nicotinate mononucleotide:5,6-dimethylbenzimidazole phosphoribosyltransferase (CobT)"/>
    <property type="match status" value="1"/>
</dbReference>
<name>COBT_SINFN</name>
<sequence length="338" mass="34692">MSASGLPFDDFRELLRNLPGPDAAALVAARERDAQLTKPPGALGRLEEIAFWLAAWTGRPPAVNRPLVAIFAGNHGVTRQGVTPFPSSVTAQMVENFAAGGAAINQICVTHDLGLKVFDLALDYPTGDITEEAALSERDCAATMAFGMEAIAGGTDLLCIGEMGIGNTTIAAAINLGLYGGTAEEWVGPGTGSEGEVLKRKIAAVERAVALHRDHLSDPLELMRRLGGREIAAMAGAILAARMQKVPVIIDGYVATAAAAILKAANPAALDHCLIGHVSGEPGHIRAIEKLGKTPLLALGMRLGEGTGAALAAGIVKAAAACHGGMATFAQAGVSNKD</sequence>
<reference key="1">
    <citation type="journal article" date="2009" name="Appl. Environ. Microbiol.">
        <title>Rhizobium sp. strain NGR234 possesses a remarkable number of secretion systems.</title>
        <authorList>
            <person name="Schmeisser C."/>
            <person name="Liesegang H."/>
            <person name="Krysciak D."/>
            <person name="Bakkou N."/>
            <person name="Le Quere A."/>
            <person name="Wollherr A."/>
            <person name="Heinemeyer I."/>
            <person name="Morgenstern B."/>
            <person name="Pommerening-Roeser A."/>
            <person name="Flores M."/>
            <person name="Palacios R."/>
            <person name="Brenner S."/>
            <person name="Gottschalk G."/>
            <person name="Schmitz R.A."/>
            <person name="Broughton W.J."/>
            <person name="Perret X."/>
            <person name="Strittmatter A.W."/>
            <person name="Streit W.R."/>
        </authorList>
    </citation>
    <scope>NUCLEOTIDE SEQUENCE [LARGE SCALE GENOMIC DNA]</scope>
    <source>
        <strain>NBRC 101917 / NGR234</strain>
    </source>
</reference>
<feature type="chain" id="PRO_1000125111" description="Nicotinate-nucleotide--dimethylbenzimidazole phosphoribosyltransferase">
    <location>
        <begin position="1"/>
        <end position="338"/>
    </location>
</feature>
<feature type="active site" description="Proton acceptor" evidence="1">
    <location>
        <position position="305"/>
    </location>
</feature>